<proteinExistence type="inferred from homology"/>
<name>PSD_CARHZ</name>
<sequence length="213" mass="24126">MKEPLVMYREGFWYLVALGVLTVLGALINFWLGLLVFLLFLFVVFFFRNPRRTIPEDEKAIISPADGVVLDVAEVNESYYLKGPAVKISIFLSIFDVHVNRAPVEGQVEYVYYREGKFLPAFKSHASEINERNYIGIKNPYLQVLVVQITGFIARRIVSFVKPGDILKKGQLLGMIKFGSCTEIYLPKETVEVLVQKGQRVYGGITVIGRIKG</sequence>
<keyword id="KW-1003">Cell membrane</keyword>
<keyword id="KW-0210">Decarboxylase</keyword>
<keyword id="KW-0444">Lipid biosynthesis</keyword>
<keyword id="KW-0443">Lipid metabolism</keyword>
<keyword id="KW-0456">Lyase</keyword>
<keyword id="KW-0472">Membrane</keyword>
<keyword id="KW-0594">Phospholipid biosynthesis</keyword>
<keyword id="KW-1208">Phospholipid metabolism</keyword>
<keyword id="KW-0670">Pyruvate</keyword>
<keyword id="KW-1185">Reference proteome</keyword>
<keyword id="KW-0865">Zymogen</keyword>
<protein>
    <recommendedName>
        <fullName evidence="1">Phosphatidylserine decarboxylase proenzyme</fullName>
        <ecNumber evidence="1">4.1.1.65</ecNumber>
    </recommendedName>
    <component>
        <recommendedName>
            <fullName evidence="1">Phosphatidylserine decarboxylase alpha chain</fullName>
        </recommendedName>
    </component>
    <component>
        <recommendedName>
            <fullName evidence="1">Phosphatidylserine decarboxylase beta chain</fullName>
        </recommendedName>
    </component>
</protein>
<dbReference type="EC" id="4.1.1.65" evidence="1"/>
<dbReference type="EMBL" id="CP000141">
    <property type="protein sequence ID" value="ABB14031.1"/>
    <property type="molecule type" value="Genomic_DNA"/>
</dbReference>
<dbReference type="RefSeq" id="WP_011343844.1">
    <property type="nucleotide sequence ID" value="NC_007503.1"/>
</dbReference>
<dbReference type="STRING" id="246194.CHY_0921"/>
<dbReference type="KEGG" id="chy:CHY_0921"/>
<dbReference type="eggNOG" id="COG0688">
    <property type="taxonomic scope" value="Bacteria"/>
</dbReference>
<dbReference type="HOGENOM" id="CLU_072492_2_0_9"/>
<dbReference type="InParanoid" id="Q3ADL6"/>
<dbReference type="OrthoDB" id="9790893at2"/>
<dbReference type="UniPathway" id="UPA00558">
    <property type="reaction ID" value="UER00616"/>
</dbReference>
<dbReference type="Proteomes" id="UP000002706">
    <property type="component" value="Chromosome"/>
</dbReference>
<dbReference type="GO" id="GO:0005886">
    <property type="term" value="C:plasma membrane"/>
    <property type="evidence" value="ECO:0007669"/>
    <property type="project" value="UniProtKB-SubCell"/>
</dbReference>
<dbReference type="GO" id="GO:0004609">
    <property type="term" value="F:phosphatidylserine decarboxylase activity"/>
    <property type="evidence" value="ECO:0007669"/>
    <property type="project" value="UniProtKB-UniRule"/>
</dbReference>
<dbReference type="GO" id="GO:0006646">
    <property type="term" value="P:phosphatidylethanolamine biosynthetic process"/>
    <property type="evidence" value="ECO:0007669"/>
    <property type="project" value="UniProtKB-UniRule"/>
</dbReference>
<dbReference type="HAMAP" id="MF_00664">
    <property type="entry name" value="PS_decarb_PSD_A"/>
    <property type="match status" value="1"/>
</dbReference>
<dbReference type="InterPro" id="IPR003817">
    <property type="entry name" value="PS_Dcarbxylase"/>
</dbReference>
<dbReference type="InterPro" id="IPR033175">
    <property type="entry name" value="PSD-A"/>
</dbReference>
<dbReference type="NCBIfam" id="NF003678">
    <property type="entry name" value="PRK05305.1-2"/>
    <property type="match status" value="1"/>
</dbReference>
<dbReference type="NCBIfam" id="NF003685">
    <property type="entry name" value="PRK05305.2-5"/>
    <property type="match status" value="1"/>
</dbReference>
<dbReference type="PANTHER" id="PTHR35809">
    <property type="entry name" value="ARCHAETIDYLSERINE DECARBOXYLASE PROENZYME-RELATED"/>
    <property type="match status" value="1"/>
</dbReference>
<dbReference type="PANTHER" id="PTHR35809:SF1">
    <property type="entry name" value="ARCHAETIDYLSERINE DECARBOXYLASE PROENZYME-RELATED"/>
    <property type="match status" value="1"/>
</dbReference>
<dbReference type="Pfam" id="PF02666">
    <property type="entry name" value="PS_Dcarbxylase"/>
    <property type="match status" value="1"/>
</dbReference>
<organism>
    <name type="scientific">Carboxydothermus hydrogenoformans (strain ATCC BAA-161 / DSM 6008 / Z-2901)</name>
    <dbReference type="NCBI Taxonomy" id="246194"/>
    <lineage>
        <taxon>Bacteria</taxon>
        <taxon>Bacillati</taxon>
        <taxon>Bacillota</taxon>
        <taxon>Clostridia</taxon>
        <taxon>Thermoanaerobacterales</taxon>
        <taxon>Thermoanaerobacteraceae</taxon>
        <taxon>Carboxydothermus</taxon>
    </lineage>
</organism>
<reference key="1">
    <citation type="journal article" date="2005" name="PLoS Genet.">
        <title>Life in hot carbon monoxide: the complete genome sequence of Carboxydothermus hydrogenoformans Z-2901.</title>
        <authorList>
            <person name="Wu M."/>
            <person name="Ren Q."/>
            <person name="Durkin A.S."/>
            <person name="Daugherty S.C."/>
            <person name="Brinkac L.M."/>
            <person name="Dodson R.J."/>
            <person name="Madupu R."/>
            <person name="Sullivan S.A."/>
            <person name="Kolonay J.F."/>
            <person name="Nelson W.C."/>
            <person name="Tallon L.J."/>
            <person name="Jones K.M."/>
            <person name="Ulrich L.E."/>
            <person name="Gonzalez J.M."/>
            <person name="Zhulin I.B."/>
            <person name="Robb F.T."/>
            <person name="Eisen J.A."/>
        </authorList>
    </citation>
    <scope>NUCLEOTIDE SEQUENCE [LARGE SCALE GENOMIC DNA]</scope>
    <source>
        <strain>ATCC BAA-161 / DSM 6008 / Z-2901</strain>
    </source>
</reference>
<feature type="chain" id="PRO_0000262201" description="Phosphatidylserine decarboxylase beta chain" evidence="1">
    <location>
        <begin position="1"/>
        <end position="179"/>
    </location>
</feature>
<feature type="chain" id="PRO_0000262202" description="Phosphatidylserine decarboxylase alpha chain" evidence="1">
    <location>
        <begin position="180"/>
        <end position="213"/>
    </location>
</feature>
<feature type="active site" description="Schiff-base intermediate with substrate; via pyruvic acid" evidence="1">
    <location>
        <position position="180"/>
    </location>
</feature>
<feature type="site" description="Cleavage (non-hydrolytic); by autocatalysis" evidence="1">
    <location>
        <begin position="179"/>
        <end position="180"/>
    </location>
</feature>
<feature type="modified residue" description="Pyruvic acid (Ser); by autocatalysis" evidence="1">
    <location>
        <position position="180"/>
    </location>
</feature>
<gene>
    <name evidence="1" type="primary">psd</name>
    <name type="ordered locus">CHY_0921</name>
</gene>
<accession>Q3ADL6</accession>
<evidence type="ECO:0000255" key="1">
    <source>
        <dbReference type="HAMAP-Rule" id="MF_00664"/>
    </source>
</evidence>
<comment type="function">
    <text evidence="1">Catalyzes the formation of phosphatidylethanolamine (PtdEtn) from phosphatidylserine (PtdSer).</text>
</comment>
<comment type="catalytic activity">
    <reaction evidence="1">
        <text>a 1,2-diacyl-sn-glycero-3-phospho-L-serine + H(+) = a 1,2-diacyl-sn-glycero-3-phosphoethanolamine + CO2</text>
        <dbReference type="Rhea" id="RHEA:20828"/>
        <dbReference type="ChEBI" id="CHEBI:15378"/>
        <dbReference type="ChEBI" id="CHEBI:16526"/>
        <dbReference type="ChEBI" id="CHEBI:57262"/>
        <dbReference type="ChEBI" id="CHEBI:64612"/>
        <dbReference type="EC" id="4.1.1.65"/>
    </reaction>
</comment>
<comment type="cofactor">
    <cofactor evidence="1">
        <name>pyruvate</name>
        <dbReference type="ChEBI" id="CHEBI:15361"/>
    </cofactor>
    <text evidence="1">Binds 1 pyruvoyl group covalently per subunit.</text>
</comment>
<comment type="pathway">
    <text evidence="1">Phospholipid metabolism; phosphatidylethanolamine biosynthesis; phosphatidylethanolamine from CDP-diacylglycerol: step 2/2.</text>
</comment>
<comment type="subunit">
    <text evidence="1">Heterodimer of a large membrane-associated beta subunit and a small pyruvoyl-containing alpha subunit.</text>
</comment>
<comment type="subcellular location">
    <subcellularLocation>
        <location evidence="1">Cell membrane</location>
        <topology evidence="1">Peripheral membrane protein</topology>
    </subcellularLocation>
</comment>
<comment type="PTM">
    <text evidence="1">Is synthesized initially as an inactive proenzyme. Formation of the active enzyme involves a self-maturation process in which the active site pyruvoyl group is generated from an internal serine residue via an autocatalytic post-translational modification. Two non-identical subunits are generated from the proenzyme in this reaction, and the pyruvate is formed at the N-terminus of the alpha chain, which is derived from the carboxyl end of the proenzyme. The post-translation cleavage follows an unusual pathway, termed non-hydrolytic serinolysis, in which the side chain hydroxyl group of the serine supplies its oxygen atom to form the C-terminus of the beta chain, while the remainder of the serine residue undergoes an oxidative deamination to produce ammonia and the pyruvoyl prosthetic group on the alpha chain.</text>
</comment>
<comment type="similarity">
    <text evidence="1">Belongs to the phosphatidylserine decarboxylase family. PSD-A subfamily.</text>
</comment>